<sequence length="308" mass="33431">MSITGIDSSHVTESQGTLLFNEPLAEYTTWRVGGPAARLYKPANIDDLALFLSRLPFDEPLLWLGLGSNSLIRDGGFSGTVILTQGCLKEMTLLSDNCIRVEAGVSCASMARFSARNNLSGGEFWAGIPGTMGGALRMNAGCHGGETWQSVIEVQTINRRGEIRTRKPEEFEVAYRHVAGLGDEWFISAKLQLSPGNKETSLQLIKDLLAHRAKTQPTNEYNCGSVFRNPPGDFAARLIESCGLKGVSIGGAVVSEKHANFIINHQGTATAANIEALIHLVQTKVREQTSIELIREVHIIGDANVQTR</sequence>
<accession>Q5WTI8</accession>
<organism>
    <name type="scientific">Legionella pneumophila (strain Lens)</name>
    <dbReference type="NCBI Taxonomy" id="297245"/>
    <lineage>
        <taxon>Bacteria</taxon>
        <taxon>Pseudomonadati</taxon>
        <taxon>Pseudomonadota</taxon>
        <taxon>Gammaproteobacteria</taxon>
        <taxon>Legionellales</taxon>
        <taxon>Legionellaceae</taxon>
        <taxon>Legionella</taxon>
    </lineage>
</organism>
<dbReference type="EC" id="1.3.1.98" evidence="1"/>
<dbReference type="EMBL" id="CR628337">
    <property type="protein sequence ID" value="CAH16776.1"/>
    <property type="molecule type" value="Genomic_DNA"/>
</dbReference>
<dbReference type="RefSeq" id="WP_011216488.1">
    <property type="nucleotide sequence ID" value="NC_006369.1"/>
</dbReference>
<dbReference type="SMR" id="Q5WTI8"/>
<dbReference type="KEGG" id="lpf:lpl2536"/>
<dbReference type="LegioList" id="lpl2536"/>
<dbReference type="HOGENOM" id="CLU_035304_1_1_6"/>
<dbReference type="UniPathway" id="UPA00219"/>
<dbReference type="Proteomes" id="UP000002517">
    <property type="component" value="Chromosome"/>
</dbReference>
<dbReference type="GO" id="GO:0005829">
    <property type="term" value="C:cytosol"/>
    <property type="evidence" value="ECO:0007669"/>
    <property type="project" value="TreeGrafter"/>
</dbReference>
<dbReference type="GO" id="GO:0071949">
    <property type="term" value="F:FAD binding"/>
    <property type="evidence" value="ECO:0007669"/>
    <property type="project" value="InterPro"/>
</dbReference>
<dbReference type="GO" id="GO:0008762">
    <property type="term" value="F:UDP-N-acetylmuramate dehydrogenase activity"/>
    <property type="evidence" value="ECO:0007669"/>
    <property type="project" value="UniProtKB-UniRule"/>
</dbReference>
<dbReference type="GO" id="GO:0051301">
    <property type="term" value="P:cell division"/>
    <property type="evidence" value="ECO:0007669"/>
    <property type="project" value="UniProtKB-KW"/>
</dbReference>
<dbReference type="GO" id="GO:0071555">
    <property type="term" value="P:cell wall organization"/>
    <property type="evidence" value="ECO:0007669"/>
    <property type="project" value="UniProtKB-KW"/>
</dbReference>
<dbReference type="GO" id="GO:0009252">
    <property type="term" value="P:peptidoglycan biosynthetic process"/>
    <property type="evidence" value="ECO:0007669"/>
    <property type="project" value="UniProtKB-UniRule"/>
</dbReference>
<dbReference type="GO" id="GO:0008360">
    <property type="term" value="P:regulation of cell shape"/>
    <property type="evidence" value="ECO:0007669"/>
    <property type="project" value="UniProtKB-KW"/>
</dbReference>
<dbReference type="Gene3D" id="3.30.465.10">
    <property type="match status" value="1"/>
</dbReference>
<dbReference type="Gene3D" id="3.90.78.10">
    <property type="entry name" value="UDP-N-acetylenolpyruvoylglucosamine reductase, C-terminal domain"/>
    <property type="match status" value="1"/>
</dbReference>
<dbReference type="Gene3D" id="3.30.43.10">
    <property type="entry name" value="Uridine Diphospho-n-acetylenolpyruvylglucosamine Reductase, domain 2"/>
    <property type="match status" value="1"/>
</dbReference>
<dbReference type="HAMAP" id="MF_00037">
    <property type="entry name" value="MurB"/>
    <property type="match status" value="1"/>
</dbReference>
<dbReference type="InterPro" id="IPR016166">
    <property type="entry name" value="FAD-bd_PCMH"/>
</dbReference>
<dbReference type="InterPro" id="IPR036318">
    <property type="entry name" value="FAD-bd_PCMH-like_sf"/>
</dbReference>
<dbReference type="InterPro" id="IPR016167">
    <property type="entry name" value="FAD-bd_PCMH_sub1"/>
</dbReference>
<dbReference type="InterPro" id="IPR016169">
    <property type="entry name" value="FAD-bd_PCMH_sub2"/>
</dbReference>
<dbReference type="InterPro" id="IPR003170">
    <property type="entry name" value="MurB"/>
</dbReference>
<dbReference type="InterPro" id="IPR011601">
    <property type="entry name" value="MurB_C"/>
</dbReference>
<dbReference type="InterPro" id="IPR036635">
    <property type="entry name" value="MurB_C_sf"/>
</dbReference>
<dbReference type="InterPro" id="IPR006094">
    <property type="entry name" value="Oxid_FAD_bind_N"/>
</dbReference>
<dbReference type="NCBIfam" id="TIGR00179">
    <property type="entry name" value="murB"/>
    <property type="match status" value="1"/>
</dbReference>
<dbReference type="NCBIfam" id="NF010480">
    <property type="entry name" value="PRK13905.1"/>
    <property type="match status" value="1"/>
</dbReference>
<dbReference type="PANTHER" id="PTHR21071">
    <property type="entry name" value="UDP-N-ACETYLENOLPYRUVOYLGLUCOSAMINE REDUCTASE"/>
    <property type="match status" value="1"/>
</dbReference>
<dbReference type="PANTHER" id="PTHR21071:SF4">
    <property type="entry name" value="UDP-N-ACETYLENOLPYRUVOYLGLUCOSAMINE REDUCTASE"/>
    <property type="match status" value="1"/>
</dbReference>
<dbReference type="Pfam" id="PF01565">
    <property type="entry name" value="FAD_binding_4"/>
    <property type="match status" value="1"/>
</dbReference>
<dbReference type="Pfam" id="PF02873">
    <property type="entry name" value="MurB_C"/>
    <property type="match status" value="1"/>
</dbReference>
<dbReference type="SUPFAM" id="SSF56176">
    <property type="entry name" value="FAD-binding/transporter-associated domain-like"/>
    <property type="match status" value="1"/>
</dbReference>
<dbReference type="SUPFAM" id="SSF56194">
    <property type="entry name" value="Uridine diphospho-N-Acetylenolpyruvylglucosamine reductase, MurB, C-terminal domain"/>
    <property type="match status" value="1"/>
</dbReference>
<dbReference type="PROSITE" id="PS51387">
    <property type="entry name" value="FAD_PCMH"/>
    <property type="match status" value="1"/>
</dbReference>
<proteinExistence type="inferred from homology"/>
<evidence type="ECO:0000255" key="1">
    <source>
        <dbReference type="HAMAP-Rule" id="MF_00037"/>
    </source>
</evidence>
<feature type="chain" id="PRO_0000224691" description="UDP-N-acetylenolpyruvoylglucosamine reductase">
    <location>
        <begin position="1"/>
        <end position="308"/>
    </location>
</feature>
<feature type="domain" description="FAD-binding PCMH-type" evidence="1">
    <location>
        <begin position="32"/>
        <end position="196"/>
    </location>
</feature>
<feature type="active site" evidence="1">
    <location>
        <position position="176"/>
    </location>
</feature>
<feature type="active site" description="Proton donor" evidence="1">
    <location>
        <position position="225"/>
    </location>
</feature>
<feature type="active site" evidence="1">
    <location>
        <position position="296"/>
    </location>
</feature>
<reference key="1">
    <citation type="journal article" date="2004" name="Nat. Genet.">
        <title>Evidence in the Legionella pneumophila genome for exploitation of host cell functions and high genome plasticity.</title>
        <authorList>
            <person name="Cazalet C."/>
            <person name="Rusniok C."/>
            <person name="Brueggemann H."/>
            <person name="Zidane N."/>
            <person name="Magnier A."/>
            <person name="Ma L."/>
            <person name="Tichit M."/>
            <person name="Jarraud S."/>
            <person name="Bouchier C."/>
            <person name="Vandenesch F."/>
            <person name="Kunst F."/>
            <person name="Etienne J."/>
            <person name="Glaser P."/>
            <person name="Buchrieser C."/>
        </authorList>
    </citation>
    <scope>NUCLEOTIDE SEQUENCE [LARGE SCALE GENOMIC DNA]</scope>
    <source>
        <strain>Lens</strain>
    </source>
</reference>
<comment type="function">
    <text evidence="1">Cell wall formation.</text>
</comment>
<comment type="catalytic activity">
    <reaction evidence="1">
        <text>UDP-N-acetyl-alpha-D-muramate + NADP(+) = UDP-N-acetyl-3-O-(1-carboxyvinyl)-alpha-D-glucosamine + NADPH + H(+)</text>
        <dbReference type="Rhea" id="RHEA:12248"/>
        <dbReference type="ChEBI" id="CHEBI:15378"/>
        <dbReference type="ChEBI" id="CHEBI:57783"/>
        <dbReference type="ChEBI" id="CHEBI:58349"/>
        <dbReference type="ChEBI" id="CHEBI:68483"/>
        <dbReference type="ChEBI" id="CHEBI:70757"/>
        <dbReference type="EC" id="1.3.1.98"/>
    </reaction>
</comment>
<comment type="cofactor">
    <cofactor evidence="1">
        <name>FAD</name>
        <dbReference type="ChEBI" id="CHEBI:57692"/>
    </cofactor>
</comment>
<comment type="pathway">
    <text evidence="1">Cell wall biogenesis; peptidoglycan biosynthesis.</text>
</comment>
<comment type="subcellular location">
    <subcellularLocation>
        <location evidence="1">Cytoplasm</location>
    </subcellularLocation>
</comment>
<comment type="similarity">
    <text evidence="1">Belongs to the MurB family.</text>
</comment>
<gene>
    <name evidence="1" type="primary">murB</name>
    <name type="ordered locus">lpl2536</name>
</gene>
<name>MURB_LEGPL</name>
<keyword id="KW-0131">Cell cycle</keyword>
<keyword id="KW-0132">Cell division</keyword>
<keyword id="KW-0133">Cell shape</keyword>
<keyword id="KW-0961">Cell wall biogenesis/degradation</keyword>
<keyword id="KW-0963">Cytoplasm</keyword>
<keyword id="KW-0274">FAD</keyword>
<keyword id="KW-0285">Flavoprotein</keyword>
<keyword id="KW-0521">NADP</keyword>
<keyword id="KW-0560">Oxidoreductase</keyword>
<keyword id="KW-0573">Peptidoglycan synthesis</keyword>
<protein>
    <recommendedName>
        <fullName evidence="1">UDP-N-acetylenolpyruvoylglucosamine reductase</fullName>
        <ecNumber evidence="1">1.3.1.98</ecNumber>
    </recommendedName>
    <alternativeName>
        <fullName evidence="1">UDP-N-acetylmuramate dehydrogenase</fullName>
    </alternativeName>
</protein>